<comment type="function">
    <text evidence="1">Participates in electron transfer between P700 and the cytochrome b6-f complex in photosystem I.</text>
</comment>
<comment type="cofactor">
    <cofactor evidence="1">
        <name>Cu(2+)</name>
        <dbReference type="ChEBI" id="CHEBI:29036"/>
    </cofactor>
</comment>
<comment type="subcellular location">
    <subcellularLocation>
        <location evidence="2">Plastid</location>
        <location evidence="2">Chloroplast thylakoid membrane</location>
        <topology evidence="1">Peripheral membrane protein</topology>
        <orientation evidence="1">Lumenal side</orientation>
    </subcellularLocation>
    <text>Loosely bound to the inner thylakoid membrane surface in chloroplasts (By similarity).</text>
</comment>
<comment type="similarity">
    <text evidence="3">Belongs to the plastocyanin family.</text>
</comment>
<accession>P00297</accession>
<feature type="chain" id="PRO_0000085574" description="Plastocyanin">
    <location>
        <begin position="1"/>
        <end position="99"/>
    </location>
</feature>
<feature type="domain" description="Plastocyanin-like">
    <location>
        <begin position="1"/>
        <end position="99"/>
    </location>
</feature>
<feature type="binding site" evidence="1">
    <location>
        <position position="37"/>
    </location>
    <ligand>
        <name>Cu cation</name>
        <dbReference type="ChEBI" id="CHEBI:23378"/>
    </ligand>
</feature>
<feature type="binding site" evidence="1">
    <location>
        <position position="84"/>
    </location>
    <ligand>
        <name>Cu cation</name>
        <dbReference type="ChEBI" id="CHEBI:23378"/>
    </ligand>
</feature>
<feature type="binding site" evidence="1">
    <location>
        <position position="87"/>
    </location>
    <ligand>
        <name>Cu cation</name>
        <dbReference type="ChEBI" id="CHEBI:23378"/>
    </ligand>
</feature>
<feature type="binding site" evidence="1">
    <location>
        <position position="92"/>
    </location>
    <ligand>
        <name>Cu cation</name>
        <dbReference type="ChEBI" id="CHEBI:23378"/>
    </ligand>
</feature>
<dbReference type="PIR" id="A00307">
    <property type="entry name" value="CUUA"/>
</dbReference>
<dbReference type="SMR" id="P00297"/>
<dbReference type="GO" id="GO:0009543">
    <property type="term" value="C:chloroplast thylakoid lumen"/>
    <property type="evidence" value="ECO:0007669"/>
    <property type="project" value="TreeGrafter"/>
</dbReference>
<dbReference type="GO" id="GO:0009535">
    <property type="term" value="C:chloroplast thylakoid membrane"/>
    <property type="evidence" value="ECO:0007669"/>
    <property type="project" value="UniProtKB-SubCell"/>
</dbReference>
<dbReference type="GO" id="GO:0005507">
    <property type="term" value="F:copper ion binding"/>
    <property type="evidence" value="ECO:0007669"/>
    <property type="project" value="InterPro"/>
</dbReference>
<dbReference type="GO" id="GO:0046028">
    <property type="term" value="F:electron transporter, transferring electrons from cytochrome b6/f complex of photosystem II activity"/>
    <property type="evidence" value="ECO:0007669"/>
    <property type="project" value="TreeGrafter"/>
</dbReference>
<dbReference type="CDD" id="cd04219">
    <property type="entry name" value="Plastocyanin"/>
    <property type="match status" value="1"/>
</dbReference>
<dbReference type="Gene3D" id="2.60.40.420">
    <property type="entry name" value="Cupredoxins - blue copper proteins"/>
    <property type="match status" value="1"/>
</dbReference>
<dbReference type="InterPro" id="IPR000923">
    <property type="entry name" value="BlueCu_1"/>
</dbReference>
<dbReference type="InterPro" id="IPR028871">
    <property type="entry name" value="BlueCu_1_BS"/>
</dbReference>
<dbReference type="InterPro" id="IPR001235">
    <property type="entry name" value="Copper_blue_Plastocyanin"/>
</dbReference>
<dbReference type="InterPro" id="IPR008972">
    <property type="entry name" value="Cupredoxin"/>
</dbReference>
<dbReference type="InterPro" id="IPR002387">
    <property type="entry name" value="Plastocyanin"/>
</dbReference>
<dbReference type="NCBIfam" id="TIGR02656">
    <property type="entry name" value="cyanin_plasto"/>
    <property type="match status" value="1"/>
</dbReference>
<dbReference type="PANTHER" id="PTHR34192">
    <property type="entry name" value="PLASTOCYANIN MAJOR ISOFORM, CHLOROPLASTIC-RELATED"/>
    <property type="match status" value="1"/>
</dbReference>
<dbReference type="PANTHER" id="PTHR34192:SF10">
    <property type="entry name" value="PLASTOCYANIN MAJOR ISOFORM, CHLOROPLASTIC-RELATED"/>
    <property type="match status" value="1"/>
</dbReference>
<dbReference type="Pfam" id="PF00127">
    <property type="entry name" value="Copper-bind"/>
    <property type="match status" value="1"/>
</dbReference>
<dbReference type="PRINTS" id="PR00156">
    <property type="entry name" value="COPPERBLUE"/>
</dbReference>
<dbReference type="PRINTS" id="PR00157">
    <property type="entry name" value="PLASTOCYANIN"/>
</dbReference>
<dbReference type="SUPFAM" id="SSF49503">
    <property type="entry name" value="Cupredoxins"/>
    <property type="match status" value="1"/>
</dbReference>
<dbReference type="PROSITE" id="PS00196">
    <property type="entry name" value="COPPER_BLUE"/>
    <property type="match status" value="1"/>
</dbReference>
<evidence type="ECO:0000250" key="1">
    <source>
        <dbReference type="UniProtKB" id="P18068"/>
    </source>
</evidence>
<evidence type="ECO:0000269" key="2">
    <source ref="1"/>
</evidence>
<evidence type="ECO:0000305" key="3"/>
<sequence>IEVLLGSDDGGLAFVPGNFSISAGEKITFKNNAGFPHNVVFDEDEIPAGVDASKISMPEEDLLNAPGETYSVTLSEKGTYSFYCSPHQGAGMVGKVTVN</sequence>
<protein>
    <recommendedName>
        <fullName>Plastocyanin</fullName>
    </recommendedName>
</protein>
<name>PLAS_SOLCR</name>
<proteinExistence type="evidence at protein level"/>
<keyword id="KW-0150">Chloroplast</keyword>
<keyword id="KW-0186">Copper</keyword>
<keyword id="KW-0903">Direct protein sequencing</keyword>
<keyword id="KW-0249">Electron transport</keyword>
<keyword id="KW-0472">Membrane</keyword>
<keyword id="KW-0479">Metal-binding</keyword>
<keyword id="KW-0934">Plastid</keyword>
<keyword id="KW-0793">Thylakoid</keyword>
<keyword id="KW-0813">Transport</keyword>
<organism>
    <name type="scientific">Solanum crispum</name>
    <name type="common">Chilean potato-tree</name>
    <dbReference type="NCBI Taxonomy" id="4110"/>
    <lineage>
        <taxon>Eukaryota</taxon>
        <taxon>Viridiplantae</taxon>
        <taxon>Streptophyta</taxon>
        <taxon>Embryophyta</taxon>
        <taxon>Tracheophyta</taxon>
        <taxon>Spermatophyta</taxon>
        <taxon>Magnoliopsida</taxon>
        <taxon>eudicotyledons</taxon>
        <taxon>Gunneridae</taxon>
        <taxon>Pentapetalae</taxon>
        <taxon>asterids</taxon>
        <taxon>lamiids</taxon>
        <taxon>Solanales</taxon>
        <taxon>Solanaceae</taxon>
        <taxon>Solanoideae</taxon>
        <taxon>Solaneae</taxon>
        <taxon>Solanum</taxon>
    </lineage>
</organism>
<reference key="1">
    <citation type="journal article" date="1978" name="Phytochemistry">
        <title>Amino acid sequence of plastocyanin from Solanum crispum using automatic methods.</title>
        <authorList>
            <person name="Haslett B.G."/>
            <person name="Evans I.M."/>
            <person name="Boulter D."/>
        </authorList>
    </citation>
    <scope>PROTEIN SEQUENCE</scope>
    <scope>SUBCELLULAR LOCATION</scope>
</reference>
<gene>
    <name type="primary">PETE</name>
</gene>